<proteinExistence type="inferred from homology"/>
<gene>
    <name evidence="1" type="primary">serS</name>
    <name type="ordered locus">RL2049</name>
</gene>
<reference key="1">
    <citation type="journal article" date="2006" name="Genome Biol.">
        <title>The genome of Rhizobium leguminosarum has recognizable core and accessory components.</title>
        <authorList>
            <person name="Young J.P.W."/>
            <person name="Crossman L.C."/>
            <person name="Johnston A.W.B."/>
            <person name="Thomson N.R."/>
            <person name="Ghazoui Z.F."/>
            <person name="Hull K.H."/>
            <person name="Wexler M."/>
            <person name="Curson A.R.J."/>
            <person name="Todd J.D."/>
            <person name="Poole P.S."/>
            <person name="Mauchline T.H."/>
            <person name="East A.K."/>
            <person name="Quail M.A."/>
            <person name="Churcher C."/>
            <person name="Arrowsmith C."/>
            <person name="Cherevach I."/>
            <person name="Chillingworth T."/>
            <person name="Clarke K."/>
            <person name="Cronin A."/>
            <person name="Davis P."/>
            <person name="Fraser A."/>
            <person name="Hance Z."/>
            <person name="Hauser H."/>
            <person name="Jagels K."/>
            <person name="Moule S."/>
            <person name="Mungall K."/>
            <person name="Norbertczak H."/>
            <person name="Rabbinowitsch E."/>
            <person name="Sanders M."/>
            <person name="Simmonds M."/>
            <person name="Whitehead S."/>
            <person name="Parkhill J."/>
        </authorList>
    </citation>
    <scope>NUCLEOTIDE SEQUENCE [LARGE SCALE GENOMIC DNA]</scope>
    <source>
        <strain>DSM 114642 / LMG 32736 / 3841</strain>
    </source>
</reference>
<evidence type="ECO:0000255" key="1">
    <source>
        <dbReference type="HAMAP-Rule" id="MF_00176"/>
    </source>
</evidence>
<protein>
    <recommendedName>
        <fullName evidence="1">Serine--tRNA ligase</fullName>
        <ecNumber evidence="1">6.1.1.11</ecNumber>
    </recommendedName>
    <alternativeName>
        <fullName evidence="1">Seryl-tRNA synthetase</fullName>
        <shortName evidence="1">SerRS</shortName>
    </alternativeName>
    <alternativeName>
        <fullName evidence="1">Seryl-tRNA(Ser/Sec) synthetase</fullName>
    </alternativeName>
</protein>
<feature type="chain" id="PRO_1000019790" description="Serine--tRNA ligase">
    <location>
        <begin position="1"/>
        <end position="427"/>
    </location>
</feature>
<feature type="binding site" evidence="1">
    <location>
        <begin position="231"/>
        <end position="233"/>
    </location>
    <ligand>
        <name>L-serine</name>
        <dbReference type="ChEBI" id="CHEBI:33384"/>
    </ligand>
</feature>
<feature type="binding site" evidence="1">
    <location>
        <begin position="262"/>
        <end position="264"/>
    </location>
    <ligand>
        <name>ATP</name>
        <dbReference type="ChEBI" id="CHEBI:30616"/>
    </ligand>
</feature>
<feature type="binding site" evidence="1">
    <location>
        <position position="285"/>
    </location>
    <ligand>
        <name>L-serine</name>
        <dbReference type="ChEBI" id="CHEBI:33384"/>
    </ligand>
</feature>
<feature type="binding site" evidence="1">
    <location>
        <begin position="349"/>
        <end position="352"/>
    </location>
    <ligand>
        <name>ATP</name>
        <dbReference type="ChEBI" id="CHEBI:30616"/>
    </ligand>
</feature>
<feature type="binding site" evidence="1">
    <location>
        <position position="385"/>
    </location>
    <ligand>
        <name>L-serine</name>
        <dbReference type="ChEBI" id="CHEBI:33384"/>
    </ligand>
</feature>
<sequence length="427" mass="47660">MLDIKWIRENPEALDAALAKRGAEPLAQSLVALDEKRRSAVQKAQDLLSRRNLASKEIGAAMAQKNSELAEKLKAEVSELKTLLPAIEEEDRQLTAELNDALSRIPNIPFDDVPVGKDEHDNIVTRTVGEKPRWNHAPKEHFEIGEALGYMDFERAAKLSGSRFTVLTGPLARLERALGQFMIDLHTSEHGYIEVSSPLMVRDEAVYGTAQLPKFAEDLFRTTDGRWLIPTAEVTLTNLVREEILDQEKLPLRFTALTPSFRSEAGSAGRDTRGMLRQHQFWKCELVSITDAESAVAEHERMTACAEEVLKRLGLHFRTMTLCTGDMGFGSRKTYDLEVWLPGQNAFREISSCSVCGDFQGRRMNARYRGKDDKSNKFVHTLNGSGTAVGRCLIAVLENYLNEDGSVTIPDVLLPYMGGLTKIERAA</sequence>
<comment type="function">
    <text evidence="1">Catalyzes the attachment of serine to tRNA(Ser). Is also able to aminoacylate tRNA(Sec) with serine, to form the misacylated tRNA L-seryl-tRNA(Sec), which will be further converted into selenocysteinyl-tRNA(Sec).</text>
</comment>
<comment type="catalytic activity">
    <reaction evidence="1">
        <text>tRNA(Ser) + L-serine + ATP = L-seryl-tRNA(Ser) + AMP + diphosphate + H(+)</text>
        <dbReference type="Rhea" id="RHEA:12292"/>
        <dbReference type="Rhea" id="RHEA-COMP:9669"/>
        <dbReference type="Rhea" id="RHEA-COMP:9703"/>
        <dbReference type="ChEBI" id="CHEBI:15378"/>
        <dbReference type="ChEBI" id="CHEBI:30616"/>
        <dbReference type="ChEBI" id="CHEBI:33019"/>
        <dbReference type="ChEBI" id="CHEBI:33384"/>
        <dbReference type="ChEBI" id="CHEBI:78442"/>
        <dbReference type="ChEBI" id="CHEBI:78533"/>
        <dbReference type="ChEBI" id="CHEBI:456215"/>
        <dbReference type="EC" id="6.1.1.11"/>
    </reaction>
</comment>
<comment type="catalytic activity">
    <reaction evidence="1">
        <text>tRNA(Sec) + L-serine + ATP = L-seryl-tRNA(Sec) + AMP + diphosphate + H(+)</text>
        <dbReference type="Rhea" id="RHEA:42580"/>
        <dbReference type="Rhea" id="RHEA-COMP:9742"/>
        <dbReference type="Rhea" id="RHEA-COMP:10128"/>
        <dbReference type="ChEBI" id="CHEBI:15378"/>
        <dbReference type="ChEBI" id="CHEBI:30616"/>
        <dbReference type="ChEBI" id="CHEBI:33019"/>
        <dbReference type="ChEBI" id="CHEBI:33384"/>
        <dbReference type="ChEBI" id="CHEBI:78442"/>
        <dbReference type="ChEBI" id="CHEBI:78533"/>
        <dbReference type="ChEBI" id="CHEBI:456215"/>
        <dbReference type="EC" id="6.1.1.11"/>
    </reaction>
</comment>
<comment type="pathway">
    <text evidence="1">Aminoacyl-tRNA biosynthesis; selenocysteinyl-tRNA(Sec) biosynthesis; L-seryl-tRNA(Sec) from L-serine and tRNA(Sec): step 1/1.</text>
</comment>
<comment type="subunit">
    <text evidence="1">Homodimer. The tRNA molecule binds across the dimer.</text>
</comment>
<comment type="subcellular location">
    <subcellularLocation>
        <location evidence="1">Cytoplasm</location>
    </subcellularLocation>
</comment>
<comment type="domain">
    <text evidence="1">Consists of two distinct domains, a catalytic core and a N-terminal extension that is involved in tRNA binding.</text>
</comment>
<comment type="similarity">
    <text evidence="1">Belongs to the class-II aminoacyl-tRNA synthetase family. Type-1 seryl-tRNA synthetase subfamily.</text>
</comment>
<organism>
    <name type="scientific">Rhizobium johnstonii (strain DSM 114642 / LMG 32736 / 3841)</name>
    <name type="common">Rhizobium leguminosarum bv. viciae</name>
    <dbReference type="NCBI Taxonomy" id="216596"/>
    <lineage>
        <taxon>Bacteria</taxon>
        <taxon>Pseudomonadati</taxon>
        <taxon>Pseudomonadota</taxon>
        <taxon>Alphaproteobacteria</taxon>
        <taxon>Hyphomicrobiales</taxon>
        <taxon>Rhizobiaceae</taxon>
        <taxon>Rhizobium/Agrobacterium group</taxon>
        <taxon>Rhizobium</taxon>
        <taxon>Rhizobium johnstonii</taxon>
    </lineage>
</organism>
<dbReference type="EC" id="6.1.1.11" evidence="1"/>
<dbReference type="EMBL" id="AM236080">
    <property type="protein sequence ID" value="CAK07541.1"/>
    <property type="molecule type" value="Genomic_DNA"/>
</dbReference>
<dbReference type="RefSeq" id="WP_011651658.1">
    <property type="nucleotide sequence ID" value="NC_008380.1"/>
</dbReference>
<dbReference type="SMR" id="Q1MHM2"/>
<dbReference type="EnsemblBacteria" id="CAK07541">
    <property type="protein sequence ID" value="CAK07541"/>
    <property type="gene ID" value="RL2049"/>
</dbReference>
<dbReference type="KEGG" id="rle:RL2049"/>
<dbReference type="eggNOG" id="COG0172">
    <property type="taxonomic scope" value="Bacteria"/>
</dbReference>
<dbReference type="HOGENOM" id="CLU_023797_1_1_5"/>
<dbReference type="UniPathway" id="UPA00906">
    <property type="reaction ID" value="UER00895"/>
</dbReference>
<dbReference type="Proteomes" id="UP000006575">
    <property type="component" value="Chromosome"/>
</dbReference>
<dbReference type="GO" id="GO:0005737">
    <property type="term" value="C:cytoplasm"/>
    <property type="evidence" value="ECO:0007669"/>
    <property type="project" value="UniProtKB-SubCell"/>
</dbReference>
<dbReference type="GO" id="GO:0005524">
    <property type="term" value="F:ATP binding"/>
    <property type="evidence" value="ECO:0007669"/>
    <property type="project" value="UniProtKB-UniRule"/>
</dbReference>
<dbReference type="GO" id="GO:0004828">
    <property type="term" value="F:serine-tRNA ligase activity"/>
    <property type="evidence" value="ECO:0007669"/>
    <property type="project" value="UniProtKB-UniRule"/>
</dbReference>
<dbReference type="GO" id="GO:0016260">
    <property type="term" value="P:selenocysteine biosynthetic process"/>
    <property type="evidence" value="ECO:0007669"/>
    <property type="project" value="UniProtKB-UniRule"/>
</dbReference>
<dbReference type="GO" id="GO:0006434">
    <property type="term" value="P:seryl-tRNA aminoacylation"/>
    <property type="evidence" value="ECO:0007669"/>
    <property type="project" value="UniProtKB-UniRule"/>
</dbReference>
<dbReference type="CDD" id="cd00770">
    <property type="entry name" value="SerRS_core"/>
    <property type="match status" value="1"/>
</dbReference>
<dbReference type="Gene3D" id="3.30.930.10">
    <property type="entry name" value="Bira Bifunctional Protein, Domain 2"/>
    <property type="match status" value="1"/>
</dbReference>
<dbReference type="Gene3D" id="1.10.287.40">
    <property type="entry name" value="Serine-tRNA synthetase, tRNA binding domain"/>
    <property type="match status" value="1"/>
</dbReference>
<dbReference type="HAMAP" id="MF_00176">
    <property type="entry name" value="Ser_tRNA_synth_type1"/>
    <property type="match status" value="1"/>
</dbReference>
<dbReference type="InterPro" id="IPR002314">
    <property type="entry name" value="aa-tRNA-synt_IIb"/>
</dbReference>
<dbReference type="InterPro" id="IPR006195">
    <property type="entry name" value="aa-tRNA-synth_II"/>
</dbReference>
<dbReference type="InterPro" id="IPR045864">
    <property type="entry name" value="aa-tRNA-synth_II/BPL/LPL"/>
</dbReference>
<dbReference type="InterPro" id="IPR002317">
    <property type="entry name" value="Ser-tRNA-ligase_type_1"/>
</dbReference>
<dbReference type="InterPro" id="IPR015866">
    <property type="entry name" value="Ser-tRNA-synth_1_N"/>
</dbReference>
<dbReference type="InterPro" id="IPR042103">
    <property type="entry name" value="SerRS_1_N_sf"/>
</dbReference>
<dbReference type="InterPro" id="IPR033729">
    <property type="entry name" value="SerRS_core"/>
</dbReference>
<dbReference type="InterPro" id="IPR010978">
    <property type="entry name" value="tRNA-bd_arm"/>
</dbReference>
<dbReference type="NCBIfam" id="TIGR00414">
    <property type="entry name" value="serS"/>
    <property type="match status" value="1"/>
</dbReference>
<dbReference type="PANTHER" id="PTHR43697:SF1">
    <property type="entry name" value="SERINE--TRNA LIGASE"/>
    <property type="match status" value="1"/>
</dbReference>
<dbReference type="PANTHER" id="PTHR43697">
    <property type="entry name" value="SERYL-TRNA SYNTHETASE"/>
    <property type="match status" value="1"/>
</dbReference>
<dbReference type="Pfam" id="PF02403">
    <property type="entry name" value="Seryl_tRNA_N"/>
    <property type="match status" value="1"/>
</dbReference>
<dbReference type="Pfam" id="PF00587">
    <property type="entry name" value="tRNA-synt_2b"/>
    <property type="match status" value="1"/>
</dbReference>
<dbReference type="PIRSF" id="PIRSF001529">
    <property type="entry name" value="Ser-tRNA-synth_IIa"/>
    <property type="match status" value="1"/>
</dbReference>
<dbReference type="PRINTS" id="PR00981">
    <property type="entry name" value="TRNASYNTHSER"/>
</dbReference>
<dbReference type="SUPFAM" id="SSF55681">
    <property type="entry name" value="Class II aaRS and biotin synthetases"/>
    <property type="match status" value="1"/>
</dbReference>
<dbReference type="SUPFAM" id="SSF46589">
    <property type="entry name" value="tRNA-binding arm"/>
    <property type="match status" value="1"/>
</dbReference>
<dbReference type="PROSITE" id="PS50862">
    <property type="entry name" value="AA_TRNA_LIGASE_II"/>
    <property type="match status" value="1"/>
</dbReference>
<accession>Q1MHM2</accession>
<name>SYS_RHIJ3</name>
<keyword id="KW-0030">Aminoacyl-tRNA synthetase</keyword>
<keyword id="KW-0067">ATP-binding</keyword>
<keyword id="KW-0963">Cytoplasm</keyword>
<keyword id="KW-0436">Ligase</keyword>
<keyword id="KW-0547">Nucleotide-binding</keyword>
<keyword id="KW-0648">Protein biosynthesis</keyword>